<feature type="chain" id="PRO_0000254828" description="Cytochrome b">
    <location>
        <begin position="1"/>
        <end position="379"/>
    </location>
</feature>
<feature type="transmembrane region" description="Helical" evidence="2">
    <location>
        <begin position="33"/>
        <end position="53"/>
    </location>
</feature>
<feature type="transmembrane region" description="Helical" evidence="2">
    <location>
        <begin position="77"/>
        <end position="98"/>
    </location>
</feature>
<feature type="transmembrane region" description="Helical" evidence="2">
    <location>
        <begin position="113"/>
        <end position="133"/>
    </location>
</feature>
<feature type="transmembrane region" description="Helical" evidence="2">
    <location>
        <begin position="178"/>
        <end position="198"/>
    </location>
</feature>
<feature type="transmembrane region" description="Helical" evidence="2">
    <location>
        <begin position="226"/>
        <end position="246"/>
    </location>
</feature>
<feature type="transmembrane region" description="Helical" evidence="2">
    <location>
        <begin position="288"/>
        <end position="308"/>
    </location>
</feature>
<feature type="transmembrane region" description="Helical" evidence="2">
    <location>
        <begin position="320"/>
        <end position="340"/>
    </location>
</feature>
<feature type="transmembrane region" description="Helical" evidence="2">
    <location>
        <begin position="347"/>
        <end position="367"/>
    </location>
</feature>
<feature type="binding site" description="axial binding residue" evidence="2">
    <location>
        <position position="83"/>
    </location>
    <ligand>
        <name>heme b</name>
        <dbReference type="ChEBI" id="CHEBI:60344"/>
        <label>b562</label>
    </ligand>
    <ligandPart>
        <name>Fe</name>
        <dbReference type="ChEBI" id="CHEBI:18248"/>
    </ligandPart>
</feature>
<feature type="binding site" description="axial binding residue" evidence="2">
    <location>
        <position position="97"/>
    </location>
    <ligand>
        <name>heme b</name>
        <dbReference type="ChEBI" id="CHEBI:60344"/>
        <label>b566</label>
    </ligand>
    <ligandPart>
        <name>Fe</name>
        <dbReference type="ChEBI" id="CHEBI:18248"/>
    </ligandPart>
</feature>
<feature type="binding site" description="axial binding residue" evidence="2">
    <location>
        <position position="182"/>
    </location>
    <ligand>
        <name>heme b</name>
        <dbReference type="ChEBI" id="CHEBI:60344"/>
        <label>b562</label>
    </ligand>
    <ligandPart>
        <name>Fe</name>
        <dbReference type="ChEBI" id="CHEBI:18248"/>
    </ligandPart>
</feature>
<feature type="binding site" description="axial binding residue" evidence="2">
    <location>
        <position position="196"/>
    </location>
    <ligand>
        <name>heme b</name>
        <dbReference type="ChEBI" id="CHEBI:60344"/>
        <label>b566</label>
    </ligand>
    <ligandPart>
        <name>Fe</name>
        <dbReference type="ChEBI" id="CHEBI:18248"/>
    </ligandPart>
</feature>
<feature type="binding site" evidence="2">
    <location>
        <position position="201"/>
    </location>
    <ligand>
        <name>a ubiquinone</name>
        <dbReference type="ChEBI" id="CHEBI:16389"/>
    </ligand>
</feature>
<dbReference type="EMBL" id="AB026105">
    <property type="protein sequence ID" value="BAB08029.1"/>
    <property type="molecule type" value="Genomic_DNA"/>
</dbReference>
<dbReference type="SMR" id="Q9MJA1"/>
<dbReference type="GO" id="GO:0005743">
    <property type="term" value="C:mitochondrial inner membrane"/>
    <property type="evidence" value="ECO:0007669"/>
    <property type="project" value="UniProtKB-SubCell"/>
</dbReference>
<dbReference type="GO" id="GO:0045275">
    <property type="term" value="C:respiratory chain complex III"/>
    <property type="evidence" value="ECO:0007669"/>
    <property type="project" value="InterPro"/>
</dbReference>
<dbReference type="GO" id="GO:0046872">
    <property type="term" value="F:metal ion binding"/>
    <property type="evidence" value="ECO:0007669"/>
    <property type="project" value="UniProtKB-KW"/>
</dbReference>
<dbReference type="GO" id="GO:0008121">
    <property type="term" value="F:ubiquinol-cytochrome-c reductase activity"/>
    <property type="evidence" value="ECO:0007669"/>
    <property type="project" value="InterPro"/>
</dbReference>
<dbReference type="GO" id="GO:0006122">
    <property type="term" value="P:mitochondrial electron transport, ubiquinol to cytochrome c"/>
    <property type="evidence" value="ECO:0007669"/>
    <property type="project" value="TreeGrafter"/>
</dbReference>
<dbReference type="CDD" id="cd00290">
    <property type="entry name" value="cytochrome_b_C"/>
    <property type="match status" value="1"/>
</dbReference>
<dbReference type="CDD" id="cd00284">
    <property type="entry name" value="Cytochrome_b_N"/>
    <property type="match status" value="1"/>
</dbReference>
<dbReference type="FunFam" id="1.20.810.10:FF:000002">
    <property type="entry name" value="Cytochrome b"/>
    <property type="match status" value="1"/>
</dbReference>
<dbReference type="Gene3D" id="1.20.810.10">
    <property type="entry name" value="Cytochrome Bc1 Complex, Chain C"/>
    <property type="match status" value="1"/>
</dbReference>
<dbReference type="InterPro" id="IPR005798">
    <property type="entry name" value="Cyt_b/b6_C"/>
</dbReference>
<dbReference type="InterPro" id="IPR036150">
    <property type="entry name" value="Cyt_b/b6_C_sf"/>
</dbReference>
<dbReference type="InterPro" id="IPR005797">
    <property type="entry name" value="Cyt_b/b6_N"/>
</dbReference>
<dbReference type="InterPro" id="IPR027387">
    <property type="entry name" value="Cytb/b6-like_sf"/>
</dbReference>
<dbReference type="InterPro" id="IPR030689">
    <property type="entry name" value="Cytochrome_b"/>
</dbReference>
<dbReference type="InterPro" id="IPR048260">
    <property type="entry name" value="Cytochrome_b_C_euk/bac"/>
</dbReference>
<dbReference type="InterPro" id="IPR048259">
    <property type="entry name" value="Cytochrome_b_N_euk/bac"/>
</dbReference>
<dbReference type="InterPro" id="IPR016174">
    <property type="entry name" value="Di-haem_cyt_TM"/>
</dbReference>
<dbReference type="PANTHER" id="PTHR19271">
    <property type="entry name" value="CYTOCHROME B"/>
    <property type="match status" value="1"/>
</dbReference>
<dbReference type="PANTHER" id="PTHR19271:SF16">
    <property type="entry name" value="CYTOCHROME B"/>
    <property type="match status" value="1"/>
</dbReference>
<dbReference type="Pfam" id="PF00032">
    <property type="entry name" value="Cytochrom_B_C"/>
    <property type="match status" value="1"/>
</dbReference>
<dbReference type="Pfam" id="PF00033">
    <property type="entry name" value="Cytochrome_B"/>
    <property type="match status" value="1"/>
</dbReference>
<dbReference type="PIRSF" id="PIRSF038885">
    <property type="entry name" value="COB"/>
    <property type="match status" value="1"/>
</dbReference>
<dbReference type="SUPFAM" id="SSF81648">
    <property type="entry name" value="a domain/subunit of cytochrome bc1 complex (Ubiquinol-cytochrome c reductase)"/>
    <property type="match status" value="1"/>
</dbReference>
<dbReference type="SUPFAM" id="SSF81342">
    <property type="entry name" value="Transmembrane di-heme cytochromes"/>
    <property type="match status" value="1"/>
</dbReference>
<dbReference type="PROSITE" id="PS51003">
    <property type="entry name" value="CYTB_CTER"/>
    <property type="match status" value="1"/>
</dbReference>
<dbReference type="PROSITE" id="PS51002">
    <property type="entry name" value="CYTB_NTER"/>
    <property type="match status" value="1"/>
</dbReference>
<sequence length="379" mass="42643">MTNIRKTHPLTKIINNSLIDLPAPSNISAWWNFGSLLGICLIIQILTGLFLAMHYTSDTATAFSSVTHICRDVNYGWIIRYMHANGASMFFICLFLHVGRGLYYGSYMFTETWNIGIILLFAVMATAFMGYVLPWGQMSFWGATVITNLLSAIPYIGTNLVEWIWGGFSVDKATLTRFFAFHFILPFIISALAAVHLLFLHETGSNNPSGIPSDSDKIPFHPYYTIKDILGALLLILMLTLLVLFSPDLLGDPDNYIPANPLNTPPHIKPEWYFLFAYAILRSIPNKLGGVLALILSILILAIIPLLHTSKQRSMMFRPLSQCLFWLLVADLLTLTWIGGQPVEHPFIIIGQLASILYFMILLVLMPIISIIENNMLKW</sequence>
<evidence type="ECO:0000250" key="1"/>
<evidence type="ECO:0000250" key="2">
    <source>
        <dbReference type="UniProtKB" id="P00157"/>
    </source>
</evidence>
<evidence type="ECO:0000255" key="3">
    <source>
        <dbReference type="PROSITE-ProRule" id="PRU00967"/>
    </source>
</evidence>
<evidence type="ECO:0000255" key="4">
    <source>
        <dbReference type="PROSITE-ProRule" id="PRU00968"/>
    </source>
</evidence>
<proteinExistence type="inferred from homology"/>
<keyword id="KW-0249">Electron transport</keyword>
<keyword id="KW-0349">Heme</keyword>
<keyword id="KW-0408">Iron</keyword>
<keyword id="KW-0472">Membrane</keyword>
<keyword id="KW-0479">Metal-binding</keyword>
<keyword id="KW-0496">Mitochondrion</keyword>
<keyword id="KW-0999">Mitochondrion inner membrane</keyword>
<keyword id="KW-0679">Respiratory chain</keyword>
<keyword id="KW-0812">Transmembrane</keyword>
<keyword id="KW-1133">Transmembrane helix</keyword>
<keyword id="KW-0813">Transport</keyword>
<keyword id="KW-0830">Ubiquinone</keyword>
<protein>
    <recommendedName>
        <fullName>Cytochrome b</fullName>
    </recommendedName>
    <alternativeName>
        <fullName>Complex III subunit 3</fullName>
    </alternativeName>
    <alternativeName>
        <fullName>Complex III subunit III</fullName>
    </alternativeName>
    <alternativeName>
        <fullName>Cytochrome b-c1 complex subunit 3</fullName>
    </alternativeName>
    <alternativeName>
        <fullName>Ubiquinol-cytochrome-c reductase complex cytochrome b subunit</fullName>
    </alternativeName>
</protein>
<accession>Q9MJA1</accession>
<gene>
    <name type="primary">MT-CYB</name>
    <name type="synonym">COB</name>
    <name type="synonym">CYTB</name>
    <name type="synonym">MTCYB</name>
</gene>
<reference key="1">
    <citation type="journal article" date="2000" name="Zool. Sci.">
        <title>Intrageneric diversity of the cytochrome b gene and phylogeny of Eurasion species of the genus mustela (Mustelidae, Carnivora).</title>
        <authorList>
            <person name="Kurose N."/>
            <person name="Abramov A.V."/>
            <person name="Masuda R."/>
        </authorList>
    </citation>
    <scope>NUCLEOTIDE SEQUENCE [GENOMIC DNA]</scope>
    <source>
        <strain>Isolate MLU-RPSK1</strain>
    </source>
</reference>
<organism>
    <name type="scientific">Mustela lutreola</name>
    <name type="common">European mink</name>
    <dbReference type="NCBI Taxonomy" id="9666"/>
    <lineage>
        <taxon>Eukaryota</taxon>
        <taxon>Metazoa</taxon>
        <taxon>Chordata</taxon>
        <taxon>Craniata</taxon>
        <taxon>Vertebrata</taxon>
        <taxon>Euteleostomi</taxon>
        <taxon>Mammalia</taxon>
        <taxon>Eutheria</taxon>
        <taxon>Laurasiatheria</taxon>
        <taxon>Carnivora</taxon>
        <taxon>Caniformia</taxon>
        <taxon>Musteloidea</taxon>
        <taxon>Mustelidae</taxon>
        <taxon>Mustelinae</taxon>
        <taxon>Mustela</taxon>
    </lineage>
</organism>
<geneLocation type="mitochondrion"/>
<name>CYB_MUSLU</name>
<comment type="function">
    <text evidence="2">Component of the ubiquinol-cytochrome c reductase complex (complex III or cytochrome b-c1 complex) that is part of the mitochondrial respiratory chain. The b-c1 complex mediates electron transfer from ubiquinol to cytochrome c. Contributes to the generation of a proton gradient across the mitochondrial membrane that is then used for ATP synthesis.</text>
</comment>
<comment type="cofactor">
    <cofactor evidence="2">
        <name>heme b</name>
        <dbReference type="ChEBI" id="CHEBI:60344"/>
    </cofactor>
    <text evidence="2">Binds 2 heme b groups non-covalently.</text>
</comment>
<comment type="subunit">
    <text evidence="2">The cytochrome bc1 complex contains 11 subunits: 3 respiratory subunits (MT-CYB, CYC1 and UQCRFS1), 2 core proteins (UQCRC1 and UQCRC2) and 6 low-molecular weight proteins (UQCRH/QCR6, UQCRB/QCR7, UQCRQ/QCR8, UQCR10/QCR9, UQCR11/QCR10 and a cleavage product of UQCRFS1). This cytochrome bc1 complex then forms a dimer.</text>
</comment>
<comment type="subcellular location">
    <subcellularLocation>
        <location evidence="2">Mitochondrion inner membrane</location>
        <topology evidence="2">Multi-pass membrane protein</topology>
    </subcellularLocation>
</comment>
<comment type="miscellaneous">
    <text evidence="1">Heme 1 (or BL or b562) is low-potential and absorbs at about 562 nm, and heme 2 (or BH or b566) is high-potential and absorbs at about 566 nm.</text>
</comment>
<comment type="similarity">
    <text evidence="3 4">Belongs to the cytochrome b family.</text>
</comment>
<comment type="caution">
    <text evidence="2">The full-length protein contains only eight transmembrane helices, not nine as predicted by bioinformatics tools.</text>
</comment>